<keyword id="KW-0002">3D-structure</keyword>
<keyword id="KW-0173">Coenzyme A biosynthesis</keyword>
<keyword id="KW-0210">Decarboxylase</keyword>
<keyword id="KW-0285">Flavoprotein</keyword>
<keyword id="KW-0288">FMN</keyword>
<keyword id="KW-0341">Growth regulation</keyword>
<keyword id="KW-0456">Lyase</keyword>
<keyword id="KW-1185">Reference proteome</keyword>
<keyword id="KW-0346">Stress response</keyword>
<sequence length="209" mass="23355">MENGKRDRQDMEVNTTPRKPRVLLAASGSVAAIKFGNLCHCFTEWAEVRAVVTKSSLHFLDKLSLPQEVTLYTDEDEWSSWNKIGDPVLHIELRRWADVLVIAPLSANTLGKIAGGLCDNLLTCIIRAWDYTKPLFVAPAMNTLMWNNPFTERHLLSLDELGITLIPPIKKRLACGDYGNGAMAEPSLIYSTVRLFWESQAHQQTGGTS</sequence>
<proteinExistence type="evidence at protein level"/>
<accession>Q9SWE5</accession>
<accession>Q6ID92</accession>
<name>HAL3A_ARATH</name>
<organism>
    <name type="scientific">Arabidopsis thaliana</name>
    <name type="common">Mouse-ear cress</name>
    <dbReference type="NCBI Taxonomy" id="3702"/>
    <lineage>
        <taxon>Eukaryota</taxon>
        <taxon>Viridiplantae</taxon>
        <taxon>Streptophyta</taxon>
        <taxon>Embryophyta</taxon>
        <taxon>Tracheophyta</taxon>
        <taxon>Spermatophyta</taxon>
        <taxon>Magnoliopsida</taxon>
        <taxon>eudicotyledons</taxon>
        <taxon>Gunneridae</taxon>
        <taxon>Pentapetalae</taxon>
        <taxon>rosids</taxon>
        <taxon>malvids</taxon>
        <taxon>Brassicales</taxon>
        <taxon>Brassicaceae</taxon>
        <taxon>Camelineae</taxon>
        <taxon>Arabidopsis</taxon>
    </lineage>
</organism>
<feature type="chain" id="PRO_0000182032" description="Phosphopantothenoylcysteine decarboxylase">
    <location>
        <begin position="1"/>
        <end position="209"/>
    </location>
</feature>
<feature type="active site" description="Proton donor" evidence="3 5 15">
    <location>
        <position position="90"/>
    </location>
</feature>
<feature type="active site" description="Proton donor" evidence="12 15">
    <location>
        <position position="175"/>
    </location>
</feature>
<feature type="binding site" evidence="2 5 13 14">
    <location>
        <begin position="28"/>
        <end position="30"/>
    </location>
    <ligand>
        <name>FMN</name>
        <dbReference type="ChEBI" id="CHEBI:58210"/>
    </ligand>
</feature>
<feature type="binding site" evidence="2 5 13 14">
    <location>
        <begin position="53"/>
        <end position="55"/>
    </location>
    <ligand>
        <name>FMN</name>
        <dbReference type="ChEBI" id="CHEBI:58210"/>
    </ligand>
</feature>
<feature type="binding site" evidence="2 5 13 14">
    <location>
        <begin position="106"/>
        <end position="109"/>
    </location>
    <ligand>
        <name>FMN</name>
        <dbReference type="ChEBI" id="CHEBI:58210"/>
    </ligand>
</feature>
<feature type="binding site" evidence="2 5 13 14">
    <location>
        <position position="140"/>
    </location>
    <ligand>
        <name>FMN</name>
        <dbReference type="ChEBI" id="CHEBI:58210"/>
    </ligand>
</feature>
<feature type="binding site" evidence="12 15">
    <location>
        <position position="142"/>
    </location>
    <ligand>
        <name>N-[(R)-4-phosphopantothenoyl]-L-cysteine</name>
        <dbReference type="ChEBI" id="CHEBI:59458"/>
    </ligand>
</feature>
<feature type="binding site" evidence="12 15">
    <location>
        <position position="172"/>
    </location>
    <ligand>
        <name>N-[(R)-4-phosphopantothenoyl]-L-cysteine</name>
        <dbReference type="ChEBI" id="CHEBI:59458"/>
    </ligand>
</feature>
<feature type="binding site" evidence="12 15">
    <location>
        <position position="174"/>
    </location>
    <ligand>
        <name>N-[(R)-4-phosphopantothenoyl]-L-cysteine</name>
        <dbReference type="ChEBI" id="CHEBI:59458"/>
    </ligand>
</feature>
<feature type="binding site" evidence="12 15">
    <location>
        <position position="183"/>
    </location>
    <ligand>
        <name>N-[(R)-4-phosphopantothenoyl]-L-cysteine</name>
        <dbReference type="ChEBI" id="CHEBI:59458"/>
    </ligand>
</feature>
<feature type="site" description="Important for catalytic activity" evidence="12 15">
    <location>
        <position position="175"/>
    </location>
</feature>
<feature type="mutagenesis site" description="No effect on activity." evidence="4">
    <original>V</original>
    <variation>I</variation>
    <location>
        <position position="30"/>
    </location>
</feature>
<feature type="mutagenesis site" description="No effect on activity." evidence="4">
    <original>I</original>
    <variation>L</variation>
    <variation>V</variation>
    <location>
        <position position="33"/>
    </location>
</feature>
<feature type="mutagenesis site" description="No effect on activity." evidence="4">
    <original>K</original>
    <variation>N</variation>
    <variation>R</variation>
    <location>
        <position position="34"/>
    </location>
</feature>
<feature type="mutagenesis site" description="Small decrease of activity." evidence="4">
    <original>K</original>
    <variation>Q</variation>
    <location>
        <position position="34"/>
    </location>
</feature>
<feature type="mutagenesis site" description="Complete loss of activity." evidence="3">
    <original>H</original>
    <variation>N</variation>
    <location>
        <position position="90"/>
    </location>
</feature>
<feature type="mutagenesis site" description="Very low activity. Can reduce the oxidied intermediate." evidence="4">
    <original>R</original>
    <variation>Q</variation>
    <location>
        <position position="95"/>
    </location>
</feature>
<feature type="mutagenesis site" description="Complete loss of activity." evidence="4">
    <original>N</original>
    <variation>D</variation>
    <location>
        <position position="142"/>
    </location>
</feature>
<feature type="mutagenesis site" description="Complete loss of activity." evidence="4">
    <original>M</original>
    <variation>L</variation>
    <location>
        <position position="145"/>
    </location>
</feature>
<feature type="mutagenesis site" description="Significantly reduced activity. Can reduce the oxidied intermediate." evidence="4">
    <original>A</original>
    <variation>S</variation>
    <location>
        <position position="174"/>
    </location>
</feature>
<feature type="mutagenesis site" description="No effect." evidence="4">
    <original>A</original>
    <variation>V</variation>
    <location>
        <position position="174"/>
    </location>
</feature>
<feature type="mutagenesis site" description="Complete loss of activity." evidence="4">
    <original>C</original>
    <variation>S</variation>
    <location>
        <position position="175"/>
    </location>
</feature>
<feature type="mutagenesis site" description="Very low activity. Can reduce the oxidied intermediate." evidence="4">
    <original>D</original>
    <variation>N</variation>
    <location>
        <position position="177"/>
    </location>
</feature>
<feature type="mutagenesis site" description="Very low activity. Can reduce the oxidied intermediate." evidence="4">
    <original>G</original>
    <variation>A</variation>
    <location>
        <position position="179"/>
    </location>
</feature>
<feature type="mutagenesis site" description="Significantly reduced activity." evidence="4">
    <original>G</original>
    <variation>A</variation>
    <location>
        <position position="181"/>
    </location>
</feature>
<feature type="strand" evidence="16">
    <location>
        <begin position="21"/>
        <end position="26"/>
    </location>
</feature>
<feature type="helix" evidence="16">
    <location>
        <begin position="30"/>
        <end position="34"/>
    </location>
</feature>
<feature type="helix" evidence="16">
    <location>
        <begin position="35"/>
        <end position="43"/>
    </location>
</feature>
<feature type="strand" evidence="16">
    <location>
        <begin position="46"/>
        <end position="52"/>
    </location>
</feature>
<feature type="helix" evidence="16">
    <location>
        <begin position="55"/>
        <end position="58"/>
    </location>
</feature>
<feature type="helix" evidence="16">
    <location>
        <begin position="62"/>
        <end position="64"/>
    </location>
</feature>
<feature type="strand" evidence="16">
    <location>
        <begin position="70"/>
        <end position="72"/>
    </location>
</feature>
<feature type="helix" evidence="16">
    <location>
        <begin position="76"/>
        <end position="80"/>
    </location>
</feature>
<feature type="helix" evidence="16">
    <location>
        <begin position="89"/>
        <end position="96"/>
    </location>
</feature>
<feature type="strand" evidence="16">
    <location>
        <begin position="98"/>
        <end position="105"/>
    </location>
</feature>
<feature type="helix" evidence="16">
    <location>
        <begin position="107"/>
        <end position="115"/>
    </location>
</feature>
<feature type="helix" evidence="16">
    <location>
        <begin position="121"/>
        <end position="127"/>
    </location>
</feature>
<feature type="strand" evidence="16">
    <location>
        <begin position="135"/>
        <end position="139"/>
    </location>
</feature>
<feature type="helix" evidence="16">
    <location>
        <begin position="143"/>
        <end position="147"/>
    </location>
</feature>
<feature type="helix" evidence="16">
    <location>
        <begin position="149"/>
        <end position="161"/>
    </location>
</feature>
<feature type="strand" evidence="17">
    <location>
        <begin position="169"/>
        <end position="172"/>
    </location>
</feature>
<feature type="strand" evidence="17">
    <location>
        <begin position="178"/>
        <end position="182"/>
    </location>
</feature>
<feature type="helix" evidence="16">
    <location>
        <begin position="186"/>
        <end position="199"/>
    </location>
</feature>
<reference key="1">
    <citation type="journal article" date="1999" name="Plant J.">
        <title>Arabidopsis thaliana AtHAL3: a flavoprotein related to salt and osmotic tolerance and plant growth.</title>
        <authorList>
            <person name="Espinosa-Ruiz A."/>
            <person name="Belles J.M."/>
            <person name="Serrano R."/>
            <person name="Culianez-Macia F.A."/>
        </authorList>
    </citation>
    <scope>NUCLEOTIDE SEQUENCE [GENOMIC DNA]</scope>
    <scope>TISSUE SPECIFICITY</scope>
    <scope>INDUCTION</scope>
    <source>
        <strain>cv. Columbia</strain>
    </source>
</reference>
<reference key="2">
    <citation type="journal article" date="2000" name="DNA Res.">
        <title>Structural analysis of Arabidopsis thaliana chromosome 3. II. Sequence features of the 4,251,695 bp regions covered by 90 P1, TAC and BAC clones.</title>
        <authorList>
            <person name="Kaneko T."/>
            <person name="Katoh T."/>
            <person name="Sato S."/>
            <person name="Nakamura Y."/>
            <person name="Asamizu E."/>
            <person name="Tabata S."/>
        </authorList>
    </citation>
    <scope>NUCLEOTIDE SEQUENCE [LARGE SCALE GENOMIC DNA]</scope>
    <source>
        <strain>cv. Columbia</strain>
    </source>
</reference>
<reference key="3">
    <citation type="journal article" date="2017" name="Plant J.">
        <title>Araport11: a complete reannotation of the Arabidopsis thaliana reference genome.</title>
        <authorList>
            <person name="Cheng C.Y."/>
            <person name="Krishnakumar V."/>
            <person name="Chan A.P."/>
            <person name="Thibaud-Nissen F."/>
            <person name="Schobel S."/>
            <person name="Town C.D."/>
        </authorList>
    </citation>
    <scope>GENOME REANNOTATION</scope>
    <source>
        <strain>cv. Columbia</strain>
    </source>
</reference>
<reference key="4">
    <citation type="submission" date="2004-09" db="EMBL/GenBank/DDBJ databases">
        <title>Arabidopsis ORF clones.</title>
        <authorList>
            <person name="Shinn P."/>
            <person name="Chen H."/>
            <person name="Cheuk R.F."/>
            <person name="Kim C.J."/>
            <person name="Ecker J.R."/>
        </authorList>
    </citation>
    <scope>NUCLEOTIDE SEQUENCE [LARGE SCALE MRNA]</scope>
    <source>
        <strain>cv. Columbia</strain>
    </source>
</reference>
<reference key="5">
    <citation type="submission" date="2006-07" db="EMBL/GenBank/DDBJ databases">
        <title>Large-scale analysis of RIKEN Arabidopsis full-length (RAFL) cDNAs.</title>
        <authorList>
            <person name="Totoki Y."/>
            <person name="Seki M."/>
            <person name="Ishida J."/>
            <person name="Nakajima M."/>
            <person name="Enju A."/>
            <person name="Kamiya A."/>
            <person name="Narusaka M."/>
            <person name="Shin-i T."/>
            <person name="Nakagawa M."/>
            <person name="Sakamoto N."/>
            <person name="Oishi K."/>
            <person name="Kohara Y."/>
            <person name="Kobayashi M."/>
            <person name="Toyoda A."/>
            <person name="Sakaki Y."/>
            <person name="Sakurai T."/>
            <person name="Iida K."/>
            <person name="Akiyama K."/>
            <person name="Satou M."/>
            <person name="Toyoda T."/>
            <person name="Konagaya A."/>
            <person name="Carninci P."/>
            <person name="Kawai J."/>
            <person name="Hayashizaki Y."/>
            <person name="Shinozaki K."/>
        </authorList>
    </citation>
    <scope>NUCLEOTIDE SEQUENCE [LARGE SCALE MRNA]</scope>
    <source>
        <strain>cv. Columbia</strain>
    </source>
</reference>
<reference key="6">
    <citation type="journal article" date="2001" name="J. Biol. Chem.">
        <title>Arabidopsis thaliana flavoprotein AtHAL3a catalyzes the decarboxylation of 4'-Phosphopantothenoylcysteine to 4'-phosphopantetheine, a key step in coenzyme A biosynthesis.</title>
        <authorList>
            <person name="Kupke T."/>
            <person name="Hernandez-Acosta P."/>
            <person name="Steinbacher S."/>
            <person name="Culianez-Macia F.A."/>
        </authorList>
    </citation>
    <scope>FUNCTION</scope>
    <scope>CATALYTIC ACTIVITY</scope>
    <scope>ACTIVE SITE</scope>
    <scope>MUTAGENESIS OF HIS-90</scope>
</reference>
<reference key="7">
    <citation type="journal article" date="2002" name="J. Biol. Chem.">
        <title>Molecular characterization of the Arabidopsis thaliana flavoprotein AtHAL3a reveals the general reaction mechanism of 4'-phosphopantothenoylcysteine decarboxylases.</title>
        <authorList>
            <person name="Hernandez-Acosta P."/>
            <person name="Schmid D.G."/>
            <person name="Jung G."/>
            <person name="Culianez-Macia F.A."/>
            <person name="Kupke T."/>
        </authorList>
    </citation>
    <scope>FUNCTION</scope>
    <scope>CATALYTIC ACTIVITY</scope>
    <scope>MUTAGENESIS OF VAL-30; ILE-33; LYS-34; ARG-95; ASN-142; MET-145; ALA-174; CYS-175; ASP-177; GLY-179 AND GLY-181</scope>
</reference>
<reference key="8">
    <citation type="journal article" date="2003" name="J. Biol. Chem.">
        <title>4'-phosphopantetheine and coenzyme A biosynthesis in plants.</title>
        <authorList>
            <person name="Kupke T."/>
            <person name="Hernandez-Acosta P."/>
            <person name="Culianez-Macia F.A."/>
        </authorList>
    </citation>
    <scope>FUNCTION</scope>
    <source>
        <strain>cv. Columbia</strain>
    </source>
</reference>
<reference key="9">
    <citation type="journal article" date="2006" name="Plant Physiol.">
        <title>An Arabidopsis mutant impaired in coenzyme A biosynthesis is sugar dependent for seedling establishment.</title>
        <authorList>
            <person name="Rubio S."/>
            <person name="Larson T.R."/>
            <person name="Gonzalez-Guzman M."/>
            <person name="Alejandro S."/>
            <person name="Graham I.A."/>
            <person name="Serrano R."/>
            <person name="Rodriguez P.L."/>
        </authorList>
    </citation>
    <scope>FUNCTION</scope>
    <scope>DISRUPTION PHENOTYPE</scope>
</reference>
<reference key="10">
    <citation type="journal article" date="2000" name="Structure">
        <title>The X-ray structure of the FMN-binding protein AtHal3 provides the structural basis for the activity of a regulatory subunit involved in signal transduction.</title>
        <authorList>
            <person name="Albert A."/>
            <person name="Martinez-Ripoll M."/>
            <person name="Espinosa-Ruiz A."/>
            <person name="Yenush L."/>
            <person name="Culianez-Macia F.A."/>
            <person name="Serrano R."/>
        </authorList>
    </citation>
    <scope>X-RAY CRYSTALLOGRAPHY (2.0 ANGSTROMS) IN COMPLEX WITH FMN</scope>
    <scope>COFACTOR</scope>
</reference>
<reference key="11">
    <citation type="journal article" date="2003" name="J. Mol. Biol.">
        <title>Crystal structure of the plant PPC decarboxylase AtHAL3a complexed with an ene-thiol reaction intermediate.</title>
        <authorList>
            <person name="Steinbacher S."/>
            <person name="Hernandez-Acosta P."/>
            <person name="Bieseler B."/>
            <person name="Blaesse M."/>
            <person name="Huber R."/>
            <person name="Culianez-Macia F.A."/>
            <person name="Kupke T."/>
        </authorList>
    </citation>
    <scope>X-RAY CRYSTALLOGRAPHY (2.21 ANGSTROMS) OF MUTANT SER-175 IN COMPLEX WITH SUBSTRATE ANALOG AND FMN</scope>
    <scope>COFACTOR</scope>
    <scope>ACTIVE SITE</scope>
</reference>
<comment type="function">
    <text evidence="1 3 4 6 7">Involved in plant growth, and salt and osmotic tolerance (PubMed:10652125). Catalyzes the decarboxylation of 4'-phosphopantothenoylcysteine to 4'-phosphopantetheine, a key step in coenzyme A biosynthesis (PubMed:11279129, PubMed:11923307, PubMed:12860978, PubMed:16415216). The enzyme is also able to decarboxylate pantothenoylcysteine to pantothenoylcysteamine (PubMed:11923307).</text>
</comment>
<comment type="catalytic activity">
    <reaction evidence="3 4">
        <text>N-[(R)-4-phosphopantothenoyl]-L-cysteine + H(+) = (R)-4'-phosphopantetheine + CO2</text>
        <dbReference type="Rhea" id="RHEA:16793"/>
        <dbReference type="ChEBI" id="CHEBI:15378"/>
        <dbReference type="ChEBI" id="CHEBI:16526"/>
        <dbReference type="ChEBI" id="CHEBI:59458"/>
        <dbReference type="ChEBI" id="CHEBI:61723"/>
        <dbReference type="EC" id="4.1.1.36"/>
    </reaction>
    <physiologicalReaction direction="left-to-right" evidence="3 4">
        <dbReference type="Rhea" id="RHEA:16794"/>
    </physiologicalReaction>
</comment>
<comment type="cofactor">
    <cofactor evidence="2 5">
        <name>FMN</name>
        <dbReference type="ChEBI" id="CHEBI:58210"/>
    </cofactor>
    <text evidence="2 5">Binds 1 FMN per subunit.</text>
</comment>
<comment type="pathway">
    <text evidence="11">Cofactor biosynthesis; coenzyme A biosynthesis; CoA from (R)-pantothenate: step 3/5.</text>
</comment>
<comment type="subunit">
    <text evidence="2 5">Homotrimer.</text>
</comment>
<comment type="tissue specificity">
    <text evidence="1">Expressed in roots, shoots, leaves, flowers, developing siliques and seeds with highest expression in seed embryos and phloem.</text>
</comment>
<comment type="induction">
    <text evidence="1">Induced by salt stress.</text>
</comment>
<comment type="disruption phenotype">
    <text evidence="7">No visible phenotype under normal growth conditions, but homozygous double mutants hal3a-1 and hal3b are embryonic lethal.</text>
</comment>
<comment type="similarity">
    <text evidence="11">Belongs to the HFCD (homooligomeric flavin containing Cys decarboxylase) superfamily.</text>
</comment>
<evidence type="ECO:0000269" key="1">
    <source>
    </source>
</evidence>
<evidence type="ECO:0000269" key="2">
    <source>
    </source>
</evidence>
<evidence type="ECO:0000269" key="3">
    <source>
    </source>
</evidence>
<evidence type="ECO:0000269" key="4">
    <source>
    </source>
</evidence>
<evidence type="ECO:0000269" key="5">
    <source>
    </source>
</evidence>
<evidence type="ECO:0000269" key="6">
    <source>
    </source>
</evidence>
<evidence type="ECO:0000269" key="7">
    <source>
    </source>
</evidence>
<evidence type="ECO:0000303" key="8">
    <source>
    </source>
</evidence>
<evidence type="ECO:0000303" key="9">
    <source>
    </source>
</evidence>
<evidence type="ECO:0000303" key="10">
    <source>
    </source>
</evidence>
<evidence type="ECO:0000305" key="11"/>
<evidence type="ECO:0000305" key="12">
    <source>
    </source>
</evidence>
<evidence type="ECO:0007744" key="13">
    <source>
        <dbReference type="PDB" id="1E20"/>
    </source>
</evidence>
<evidence type="ECO:0007744" key="14">
    <source>
        <dbReference type="PDB" id="1MVL"/>
    </source>
</evidence>
<evidence type="ECO:0007744" key="15">
    <source>
        <dbReference type="PDB" id="1MVN"/>
    </source>
</evidence>
<evidence type="ECO:0007829" key="16">
    <source>
        <dbReference type="PDB" id="1MVL"/>
    </source>
</evidence>
<evidence type="ECO:0007829" key="17">
    <source>
        <dbReference type="PDB" id="1MVN"/>
    </source>
</evidence>
<protein>
    <recommendedName>
        <fullName evidence="9">Phosphopantothenoylcysteine decarboxylase</fullName>
        <shortName evidence="11">PPCDC</shortName>
        <ecNumber evidence="3 4">4.1.1.36</ecNumber>
    </recommendedName>
    <alternativeName>
        <fullName evidence="10">AtCoaC1</fullName>
    </alternativeName>
    <alternativeName>
        <fullName evidence="8">Halotolerance protein Hal3a</fullName>
        <shortName evidence="8">AtHal3a</shortName>
    </alternativeName>
</protein>
<gene>
    <name evidence="8" type="primary">HAL3A</name>
    <name evidence="10" type="synonym">COAC1</name>
    <name type="ordered locus">At3g18030</name>
    <name type="ORF">MBG14.2</name>
</gene>
<dbReference type="EC" id="4.1.1.36" evidence="3 4"/>
<dbReference type="EMBL" id="AF166262">
    <property type="protein sequence ID" value="AAD51616.1"/>
    <property type="molecule type" value="Genomic_DNA"/>
</dbReference>
<dbReference type="EMBL" id="AB026641">
    <property type="protein sequence ID" value="BAB01331.1"/>
    <property type="molecule type" value="Genomic_DNA"/>
</dbReference>
<dbReference type="EMBL" id="CP002686">
    <property type="protein sequence ID" value="AEE76036.1"/>
    <property type="molecule type" value="Genomic_DNA"/>
</dbReference>
<dbReference type="EMBL" id="BT014781">
    <property type="protein sequence ID" value="AAT41764.1"/>
    <property type="molecule type" value="mRNA"/>
</dbReference>
<dbReference type="EMBL" id="BT015689">
    <property type="protein sequence ID" value="AAU29466.1"/>
    <property type="molecule type" value="mRNA"/>
</dbReference>
<dbReference type="EMBL" id="AK228559">
    <property type="protein sequence ID" value="BAF00478.1"/>
    <property type="molecule type" value="mRNA"/>
</dbReference>
<dbReference type="RefSeq" id="NP_188430.1">
    <property type="nucleotide sequence ID" value="NM_112684.5"/>
</dbReference>
<dbReference type="PDB" id="1E20">
    <property type="method" value="X-ray"/>
    <property type="resolution" value="2.02 A"/>
    <property type="chains" value="A=1-209"/>
</dbReference>
<dbReference type="PDB" id="1MVL">
    <property type="method" value="X-ray"/>
    <property type="resolution" value="2.00 A"/>
    <property type="chains" value="A=1-209"/>
</dbReference>
<dbReference type="PDB" id="1MVN">
    <property type="method" value="X-ray"/>
    <property type="resolution" value="2.21 A"/>
    <property type="chains" value="A=1-209"/>
</dbReference>
<dbReference type="PDBsum" id="1E20"/>
<dbReference type="PDBsum" id="1MVL"/>
<dbReference type="PDBsum" id="1MVN"/>
<dbReference type="SMR" id="Q9SWE5"/>
<dbReference type="BioGRID" id="6660">
    <property type="interactions" value="1"/>
</dbReference>
<dbReference type="FunCoup" id="Q9SWE5">
    <property type="interactions" value="3081"/>
</dbReference>
<dbReference type="STRING" id="3702.Q9SWE5"/>
<dbReference type="PaxDb" id="3702-AT3G18030.1"/>
<dbReference type="ProteomicsDB" id="247161"/>
<dbReference type="DNASU" id="821327"/>
<dbReference type="EnsemblPlants" id="AT3G18030.1">
    <property type="protein sequence ID" value="AT3G18030.1"/>
    <property type="gene ID" value="AT3G18030"/>
</dbReference>
<dbReference type="GeneID" id="821327"/>
<dbReference type="Gramene" id="AT3G18030.1">
    <property type="protein sequence ID" value="AT3G18030.1"/>
    <property type="gene ID" value="AT3G18030"/>
</dbReference>
<dbReference type="KEGG" id="ath:AT3G18030"/>
<dbReference type="Araport" id="AT3G18030"/>
<dbReference type="TAIR" id="AT3G18030">
    <property type="gene designation" value="HAL3A"/>
</dbReference>
<dbReference type="eggNOG" id="KOG0672">
    <property type="taxonomic scope" value="Eukaryota"/>
</dbReference>
<dbReference type="HOGENOM" id="CLU_033319_3_2_1"/>
<dbReference type="InParanoid" id="Q9SWE5"/>
<dbReference type="OMA" id="KGLACGD"/>
<dbReference type="OrthoDB" id="1532798at2759"/>
<dbReference type="PhylomeDB" id="Q9SWE5"/>
<dbReference type="BRENDA" id="4.1.1.36">
    <property type="organism ID" value="399"/>
</dbReference>
<dbReference type="UniPathway" id="UPA00241">
    <property type="reaction ID" value="UER00354"/>
</dbReference>
<dbReference type="EvolutionaryTrace" id="Q9SWE5"/>
<dbReference type="PRO" id="PR:Q9SWE5"/>
<dbReference type="Proteomes" id="UP000006548">
    <property type="component" value="Chromosome 3"/>
</dbReference>
<dbReference type="ExpressionAtlas" id="Q9SWE5">
    <property type="expression patterns" value="baseline and differential"/>
</dbReference>
<dbReference type="GO" id="GO:0004633">
    <property type="term" value="F:phosphopantothenoylcysteine decarboxylase activity"/>
    <property type="evidence" value="ECO:0000314"/>
    <property type="project" value="TAIR"/>
</dbReference>
<dbReference type="GO" id="GO:0015937">
    <property type="term" value="P:coenzyme A biosynthetic process"/>
    <property type="evidence" value="ECO:0000315"/>
    <property type="project" value="CACAO"/>
</dbReference>
<dbReference type="GO" id="GO:0042538">
    <property type="term" value="P:hyperosmotic salinity response"/>
    <property type="evidence" value="ECO:0000315"/>
    <property type="project" value="TAIR"/>
</dbReference>
<dbReference type="FunFam" id="3.40.50.1950:FF:000004">
    <property type="entry name" value="Phosphopantothenoylcysteine decarboxylase"/>
    <property type="match status" value="1"/>
</dbReference>
<dbReference type="Gene3D" id="3.40.50.1950">
    <property type="entry name" value="Flavin prenyltransferase-like"/>
    <property type="match status" value="1"/>
</dbReference>
<dbReference type="InterPro" id="IPR036551">
    <property type="entry name" value="Flavin_trans-like"/>
</dbReference>
<dbReference type="InterPro" id="IPR003382">
    <property type="entry name" value="Flavoprotein"/>
</dbReference>
<dbReference type="PANTHER" id="PTHR14359">
    <property type="entry name" value="HOMO-OLIGOMERIC FLAVIN CONTAINING CYS DECARBOXYLASE FAMILY"/>
    <property type="match status" value="1"/>
</dbReference>
<dbReference type="PANTHER" id="PTHR14359:SF6">
    <property type="entry name" value="PHOSPHOPANTOTHENOYLCYSTEINE DECARBOXYLASE"/>
    <property type="match status" value="1"/>
</dbReference>
<dbReference type="Pfam" id="PF02441">
    <property type="entry name" value="Flavoprotein"/>
    <property type="match status" value="1"/>
</dbReference>
<dbReference type="SUPFAM" id="SSF52507">
    <property type="entry name" value="Homo-oligomeric flavin-containing Cys decarboxylases, HFCD"/>
    <property type="match status" value="1"/>
</dbReference>